<keyword id="KW-0002">3D-structure</keyword>
<keyword id="KW-0963">Cytoplasm</keyword>
<keyword id="KW-0276">Fatty acid metabolism</keyword>
<keyword id="KW-0443">Lipid metabolism</keyword>
<keyword id="KW-1185">Reference proteome</keyword>
<keyword id="KW-0808">Transferase</keyword>
<protein>
    <recommendedName>
        <fullName evidence="9">Acetate CoA-transferase subunit alpha</fullName>
        <ecNumber evidence="2 3 5">2.8.3.8</ecNumber>
    </recommendedName>
    <alternativeName>
        <fullName evidence="8">Acetoacetyl-CoA transferase subunit alpha</fullName>
        <shortName evidence="8">AA-CoA transferase subunit alpha</shortName>
    </alternativeName>
    <alternativeName>
        <fullName evidence="7">Acetyl-CoA:acetoacetyl-CoA transferase subunit alpha</fullName>
    </alternativeName>
</protein>
<name>ATOD_ECOLI</name>
<accession>P76458</accession>
<sequence>MKTKLMTLQDATGFFRDGMTIMVGGFMGIGTPSRLVEALLESGVRDLTLIANDTAFVDTGIGPLIVNGRVRKVIASHIGTNPETGRRMISGEMDVVLVPQGTLIEQIRCGGAGLGGFLTPTGVGTVVEEGKQTLTLDGKTWLLERPLRADLALIRAHRCDTLGNLTYQLSARNFNPLIALAADITLVEPDELVETGELQPDHIVTPGAVIDHIIVSQESK</sequence>
<comment type="function">
    <text evidence="2 3 5">Coenzyme A transferase which is involved in short-chain fatty acid degradation and catalyzes the activation of short-chain fatty acids to their respective CoA thiolesters (PubMed:1103739, PubMed:3025185). During acetoacetate degradation, catalyzes the transfer of CoA from acetyl-CoA to acetoacetate by a mechanism involving a covalent enzyme-CoA compound as a reaction intermediate (PubMed:1103741). Utilizes a variety of short chain acyl-CoA and carboxylic acid substrates but exhibits maximal activity with normal and 3-keto substrates (PubMed:1103739).</text>
</comment>
<comment type="catalytic activity">
    <reaction evidence="2 3 5">
        <text>an acyl-CoA + acetate = a carboxylate + acetyl-CoA</text>
        <dbReference type="Rhea" id="RHEA:13381"/>
        <dbReference type="ChEBI" id="CHEBI:29067"/>
        <dbReference type="ChEBI" id="CHEBI:30089"/>
        <dbReference type="ChEBI" id="CHEBI:57288"/>
        <dbReference type="ChEBI" id="CHEBI:58342"/>
        <dbReference type="EC" id="2.8.3.8"/>
    </reaction>
</comment>
<comment type="catalytic activity">
    <reaction evidence="2 3 5">
        <text>acetoacetate + acetyl-CoA = acetoacetyl-CoA + acetate</text>
        <dbReference type="Rhea" id="RHEA:27806"/>
        <dbReference type="ChEBI" id="CHEBI:13705"/>
        <dbReference type="ChEBI" id="CHEBI:30089"/>
        <dbReference type="ChEBI" id="CHEBI:57286"/>
        <dbReference type="ChEBI" id="CHEBI:57288"/>
    </reaction>
</comment>
<comment type="catalytic activity">
    <reaction evidence="2">
        <text>butanoate + acetyl-CoA = butanoyl-CoA + acetate</text>
        <dbReference type="Rhea" id="RHEA:30071"/>
        <dbReference type="ChEBI" id="CHEBI:17968"/>
        <dbReference type="ChEBI" id="CHEBI:30089"/>
        <dbReference type="ChEBI" id="CHEBI:57288"/>
        <dbReference type="ChEBI" id="CHEBI:57371"/>
    </reaction>
</comment>
<comment type="catalytic activity">
    <reaction evidence="2">
        <text>acetoacetate + butanoyl-CoA = acetoacetyl-CoA + butanoate</text>
        <dbReference type="Rhea" id="RHEA:12961"/>
        <dbReference type="ChEBI" id="CHEBI:13705"/>
        <dbReference type="ChEBI" id="CHEBI:17968"/>
        <dbReference type="ChEBI" id="CHEBI:57286"/>
        <dbReference type="ChEBI" id="CHEBI:57371"/>
    </reaction>
</comment>
<comment type="activity regulation">
    <text evidence="2">Inhibited by p-chloromercuribenzoate.</text>
</comment>
<comment type="biophysicochemical properties">
    <kinetics>
        <KM evidence="3">0.26 mM for acetyl-CoA (for acetoacetyl-CoA formation)</KM>
        <KM evidence="3">0.035 mM for acetoacetyl-CoA (for acetyl-CoA formation)</KM>
    </kinetics>
</comment>
<comment type="pathway">
    <text evidence="10">Lipid metabolism; short-chain fatty acid metabolism.</text>
</comment>
<comment type="subunit">
    <text evidence="2 6 10">Heterotetramer composed of two alpha subunits (AtoD) and two beta subunits (AtoA).</text>
</comment>
<comment type="subcellular location">
    <subcellularLocation>
        <location evidence="2">Cytoplasm</location>
    </subcellularLocation>
    <text evidence="2">Membrane associated.</text>
</comment>
<comment type="induction">
    <text evidence="4">Transcriptionally regulated by the regulatory protein AtoC.</text>
</comment>
<comment type="disruption phenotype">
    <text evidence="5">Mutant lacks acetoacetyl-CoA transferase activity.</text>
</comment>
<comment type="similarity">
    <text evidence="9">Belongs to the 3-oxoacid CoA-transferase subunit A family.</text>
</comment>
<feature type="chain" id="PRO_0000157904" description="Acetate CoA-transferase subunit alpha">
    <location>
        <begin position="1"/>
        <end position="220"/>
    </location>
</feature>
<feature type="binding site" evidence="1">
    <location>
        <begin position="24"/>
        <end position="30"/>
    </location>
    <ligand>
        <name>CoA</name>
        <dbReference type="ChEBI" id="CHEBI:57287"/>
    </ligand>
</feature>
<feature type="strand" evidence="13">
    <location>
        <begin position="4"/>
        <end position="6"/>
    </location>
</feature>
<feature type="helix" evidence="13">
    <location>
        <begin position="8"/>
        <end position="11"/>
    </location>
</feature>
<feature type="helix" evidence="13">
    <location>
        <begin position="12"/>
        <end position="14"/>
    </location>
</feature>
<feature type="strand" evidence="13">
    <location>
        <begin position="20"/>
        <end position="23"/>
    </location>
</feature>
<feature type="helix" evidence="13">
    <location>
        <begin position="33"/>
        <end position="42"/>
    </location>
</feature>
<feature type="strand" evidence="13">
    <location>
        <begin position="46"/>
        <end position="50"/>
    </location>
</feature>
<feature type="helix" evidence="13">
    <location>
        <begin position="62"/>
        <end position="66"/>
    </location>
</feature>
<feature type="strand" evidence="13">
    <location>
        <begin position="70"/>
        <end position="77"/>
    </location>
</feature>
<feature type="helix" evidence="13">
    <location>
        <begin position="82"/>
        <end position="89"/>
    </location>
</feature>
<feature type="strand" evidence="13">
    <location>
        <begin position="92"/>
        <end position="97"/>
    </location>
</feature>
<feature type="helix" evidence="13">
    <location>
        <begin position="100"/>
        <end position="111"/>
    </location>
</feature>
<feature type="strand" evidence="13">
    <location>
        <begin position="116"/>
        <end position="120"/>
    </location>
</feature>
<feature type="turn" evidence="13">
    <location>
        <begin position="121"/>
        <end position="124"/>
    </location>
</feature>
<feature type="helix" evidence="14">
    <location>
        <begin position="126"/>
        <end position="128"/>
    </location>
</feature>
<feature type="strand" evidence="13">
    <location>
        <begin position="133"/>
        <end position="136"/>
    </location>
</feature>
<feature type="strand" evidence="13">
    <location>
        <begin position="139"/>
        <end position="144"/>
    </location>
</feature>
<feature type="strand" evidence="13">
    <location>
        <begin position="149"/>
        <end position="160"/>
    </location>
</feature>
<feature type="helix" evidence="13">
    <location>
        <begin position="169"/>
        <end position="172"/>
    </location>
</feature>
<feature type="helix" evidence="13">
    <location>
        <begin position="175"/>
        <end position="181"/>
    </location>
</feature>
<feature type="strand" evidence="13">
    <location>
        <begin position="182"/>
        <end position="193"/>
    </location>
</feature>
<feature type="helix" evidence="13">
    <location>
        <begin position="200"/>
        <end position="202"/>
    </location>
</feature>
<feature type="helix" evidence="13">
    <location>
        <begin position="207"/>
        <end position="209"/>
    </location>
</feature>
<feature type="strand" evidence="13">
    <location>
        <begin position="212"/>
        <end position="214"/>
    </location>
</feature>
<organism>
    <name type="scientific">Escherichia coli (strain K12)</name>
    <dbReference type="NCBI Taxonomy" id="83333"/>
    <lineage>
        <taxon>Bacteria</taxon>
        <taxon>Pseudomonadati</taxon>
        <taxon>Pseudomonadota</taxon>
        <taxon>Gammaproteobacteria</taxon>
        <taxon>Enterobacterales</taxon>
        <taxon>Enterobacteriaceae</taxon>
        <taxon>Escherichia</taxon>
    </lineage>
</organism>
<reference key="1">
    <citation type="journal article" date="1996" name="DNA Res.">
        <title>A 460-kb DNA sequence of the Escherichia coli K-12 genome corresponding to the 40.1-50.0 min region on the linkage map.</title>
        <authorList>
            <person name="Itoh T."/>
            <person name="Aiba H."/>
            <person name="Baba T."/>
            <person name="Fujita K."/>
            <person name="Hayashi K."/>
            <person name="Inada T."/>
            <person name="Isono K."/>
            <person name="Kasai H."/>
            <person name="Kimura S."/>
            <person name="Kitakawa M."/>
            <person name="Kitagawa M."/>
            <person name="Makino K."/>
            <person name="Miki T."/>
            <person name="Mizobuchi K."/>
            <person name="Mori H."/>
            <person name="Mori T."/>
            <person name="Motomura K."/>
            <person name="Nakade S."/>
            <person name="Nakamura Y."/>
            <person name="Nashimoto H."/>
            <person name="Nishio Y."/>
            <person name="Oshima T."/>
            <person name="Saito N."/>
            <person name="Sampei G."/>
            <person name="Seki Y."/>
            <person name="Sivasundaram S."/>
            <person name="Tagami H."/>
            <person name="Takeda J."/>
            <person name="Takemoto K."/>
            <person name="Wada C."/>
            <person name="Yamamoto Y."/>
            <person name="Horiuchi T."/>
        </authorList>
    </citation>
    <scope>NUCLEOTIDE SEQUENCE [LARGE SCALE GENOMIC DNA]</scope>
    <source>
        <strain>K12 / W3110 / ATCC 27325 / DSM 5911</strain>
    </source>
</reference>
<reference key="2">
    <citation type="journal article" date="1997" name="Science">
        <title>The complete genome sequence of Escherichia coli K-12.</title>
        <authorList>
            <person name="Blattner F.R."/>
            <person name="Plunkett G. III"/>
            <person name="Bloch C.A."/>
            <person name="Perna N.T."/>
            <person name="Burland V."/>
            <person name="Riley M."/>
            <person name="Collado-Vides J."/>
            <person name="Glasner J.D."/>
            <person name="Rode C.K."/>
            <person name="Mayhew G.F."/>
            <person name="Gregor J."/>
            <person name="Davis N.W."/>
            <person name="Kirkpatrick H.A."/>
            <person name="Goeden M.A."/>
            <person name="Rose D.J."/>
            <person name="Mau B."/>
            <person name="Shao Y."/>
        </authorList>
    </citation>
    <scope>NUCLEOTIDE SEQUENCE [LARGE SCALE GENOMIC DNA]</scope>
    <source>
        <strain>K12 / MG1655 / ATCC 47076</strain>
    </source>
</reference>
<reference key="3">
    <citation type="journal article" date="2006" name="Mol. Syst. Biol.">
        <title>Highly accurate genome sequences of Escherichia coli K-12 strains MG1655 and W3110.</title>
        <authorList>
            <person name="Hayashi K."/>
            <person name="Morooka N."/>
            <person name="Yamamoto Y."/>
            <person name="Fujita K."/>
            <person name="Isono K."/>
            <person name="Choi S."/>
            <person name="Ohtsubo E."/>
            <person name="Baba T."/>
            <person name="Wanner B.L."/>
            <person name="Mori H."/>
            <person name="Horiuchi T."/>
        </authorList>
    </citation>
    <scope>NUCLEOTIDE SEQUENCE [LARGE SCALE GENOMIC DNA]</scope>
    <source>
        <strain>K12 / W3110 / ATCC 27325 / DSM 5911</strain>
    </source>
</reference>
<reference key="4">
    <citation type="journal article" date="1975" name="Arch. Biochem. Biophys.">
        <title>Purification and properties of Escherichia coli coenzyme A-transferase.</title>
        <authorList>
            <person name="Sramek S.J."/>
            <person name="Frerman F.E."/>
        </authorList>
    </citation>
    <scope>FUNCTION</scope>
    <scope>CATALYTIC ACTIVITY</scope>
    <scope>ACTIVITY REGULATION</scope>
    <scope>SUBUNIT</scope>
    <scope>SUBCELLULAR LOCATION</scope>
</reference>
<reference key="5">
    <citation type="journal article" date="1975" name="Arch. Biochem. Biophys.">
        <title>Escherichia coli coenzyme A-transferase: kinetics, catalytic pathway and structure.</title>
        <authorList>
            <person name="Sramek S.J."/>
            <person name="Frerman F.E."/>
        </authorList>
    </citation>
    <scope>FUNCTION</scope>
    <scope>CATALYTIC ACTIVITY</scope>
    <scope>REACTION MECHANISM</scope>
    <scope>BIOPHYSICOCHEMICAL PROPERTIES</scope>
</reference>
<reference key="6">
    <citation type="journal article" date="1987" name="J. Bacteriol.">
        <title>Genetic and molecular characterization of the genes involved in short-chain fatty acid degradation in Escherichia coli: the ato system.</title>
        <authorList>
            <person name="Jenkins L.S."/>
            <person name="Nunn W.D."/>
        </authorList>
    </citation>
    <scope>FUNCTION</scope>
    <scope>CATALYTIC ACTIVITY</scope>
    <scope>SUBUNIT</scope>
    <scope>DISRUPTION PHENOTYPE</scope>
    <source>
        <strain>K12</strain>
    </source>
</reference>
<reference key="7">
    <citation type="journal article" date="1987" name="J. Bacteriol.">
        <title>Regulation of the ato operon by the atoC gene in Escherichia coli.</title>
        <authorList>
            <person name="Jenkins L.S."/>
            <person name="Nunn W.D."/>
        </authorList>
    </citation>
    <scope>INDUCTION</scope>
    <source>
        <strain>K12</strain>
    </source>
</reference>
<reference evidence="11" key="8">
    <citation type="journal article" date="2002" name="Acta Crystallogr. D">
        <title>Autotracing of Escherichia coli acetate CoA-transferase alpha-subunit structure using 3.4 A MAD and 1.9 A native data.</title>
        <authorList>
            <person name="Korolev S."/>
            <person name="Koroleva O."/>
            <person name="Petterson K."/>
            <person name="Gu M."/>
            <person name="Collart F."/>
            <person name="Dementieva I."/>
            <person name="Joachimiak A."/>
        </authorList>
    </citation>
    <scope>X-RAY CRYSTALLOGRAPHY (1.90 ANGSTROMS)</scope>
</reference>
<reference evidence="12" key="9">
    <citation type="submission" date="2015-08" db="PDB data bank">
        <title>Crystal structure of AtoDA complex.</title>
        <authorList>
            <person name="Arbing M.A."/>
            <person name="Koo C.W."/>
            <person name="Shin A."/>
            <person name="Medrano-Soto A."/>
            <person name="Eisenberg D."/>
        </authorList>
    </citation>
    <scope>X-RAY CRYSTALLOGRAPHY (2.55 ANGSTROMS)</scope>
    <scope>SUBUNIT</scope>
</reference>
<proteinExistence type="evidence at protein level"/>
<evidence type="ECO:0000255" key="1"/>
<evidence type="ECO:0000269" key="2">
    <source>
    </source>
</evidence>
<evidence type="ECO:0000269" key="3">
    <source>
    </source>
</evidence>
<evidence type="ECO:0000269" key="4">
    <source>
    </source>
</evidence>
<evidence type="ECO:0000269" key="5">
    <source>
    </source>
</evidence>
<evidence type="ECO:0000269" key="6">
    <source ref="9"/>
</evidence>
<evidence type="ECO:0000303" key="7">
    <source>
    </source>
</evidence>
<evidence type="ECO:0000303" key="8">
    <source>
    </source>
</evidence>
<evidence type="ECO:0000305" key="9"/>
<evidence type="ECO:0000305" key="10">
    <source>
    </source>
</evidence>
<evidence type="ECO:0007744" key="11">
    <source>
        <dbReference type="PDB" id="1K6D"/>
    </source>
</evidence>
<evidence type="ECO:0007744" key="12">
    <source>
        <dbReference type="PDB" id="5DBN"/>
    </source>
</evidence>
<evidence type="ECO:0007829" key="13">
    <source>
        <dbReference type="PDB" id="1K6D"/>
    </source>
</evidence>
<evidence type="ECO:0007829" key="14">
    <source>
        <dbReference type="PDB" id="5DBN"/>
    </source>
</evidence>
<gene>
    <name evidence="8" type="primary">atoD</name>
    <name type="ordered locus">b2221</name>
    <name type="ordered locus">JW2215</name>
</gene>
<dbReference type="EC" id="2.8.3.8" evidence="2 3 5"/>
<dbReference type="EMBL" id="U00096">
    <property type="protein sequence ID" value="AAC75281.1"/>
    <property type="molecule type" value="Genomic_DNA"/>
</dbReference>
<dbReference type="EMBL" id="AP009048">
    <property type="protein sequence ID" value="BAA16017.1"/>
    <property type="molecule type" value="Genomic_DNA"/>
</dbReference>
<dbReference type="PIR" id="C64992">
    <property type="entry name" value="C64992"/>
</dbReference>
<dbReference type="RefSeq" id="NP_416725.1">
    <property type="nucleotide sequence ID" value="NC_000913.3"/>
</dbReference>
<dbReference type="RefSeq" id="WP_000850540.1">
    <property type="nucleotide sequence ID" value="NZ_STEB01000002.1"/>
</dbReference>
<dbReference type="PDB" id="1K6D">
    <property type="method" value="X-ray"/>
    <property type="resolution" value="1.90 A"/>
    <property type="chains" value="A/B=1-220"/>
</dbReference>
<dbReference type="PDB" id="5DBN">
    <property type="method" value="X-ray"/>
    <property type="resolution" value="2.55 A"/>
    <property type="chains" value="A/C/E/G=1-220"/>
</dbReference>
<dbReference type="PDBsum" id="1K6D"/>
<dbReference type="PDBsum" id="5DBN"/>
<dbReference type="SMR" id="P76458"/>
<dbReference type="BioGRID" id="4259179">
    <property type="interactions" value="17"/>
</dbReference>
<dbReference type="DIP" id="DIP-9191N"/>
<dbReference type="FunCoup" id="P76458">
    <property type="interactions" value="472"/>
</dbReference>
<dbReference type="IntAct" id="P76458">
    <property type="interactions" value="3"/>
</dbReference>
<dbReference type="STRING" id="511145.b2221"/>
<dbReference type="PaxDb" id="511145-b2221"/>
<dbReference type="EnsemblBacteria" id="AAC75281">
    <property type="protein sequence ID" value="AAC75281"/>
    <property type="gene ID" value="b2221"/>
</dbReference>
<dbReference type="GeneID" id="93774955"/>
<dbReference type="GeneID" id="947525"/>
<dbReference type="KEGG" id="ecj:JW2215"/>
<dbReference type="KEGG" id="eco:b2221"/>
<dbReference type="KEGG" id="ecoc:C3026_12415"/>
<dbReference type="PATRIC" id="fig|1411691.4.peg.14"/>
<dbReference type="EchoBASE" id="EB1620"/>
<dbReference type="eggNOG" id="COG1788">
    <property type="taxonomic scope" value="Bacteria"/>
</dbReference>
<dbReference type="HOGENOM" id="CLU_019942_2_1_6"/>
<dbReference type="InParanoid" id="P76458"/>
<dbReference type="OMA" id="AFFCPTA"/>
<dbReference type="OrthoDB" id="9777193at2"/>
<dbReference type="PhylomeDB" id="P76458"/>
<dbReference type="BioCyc" id="EcoCyc:ATOD-MONOMER"/>
<dbReference type="BioCyc" id="MetaCyc:ATOD-MONOMER"/>
<dbReference type="BRENDA" id="2.8.3.8">
    <property type="organism ID" value="2026"/>
</dbReference>
<dbReference type="UniPathway" id="UPA00656"/>
<dbReference type="EvolutionaryTrace" id="P76458"/>
<dbReference type="PRO" id="PR:P76458"/>
<dbReference type="Proteomes" id="UP000000625">
    <property type="component" value="Chromosome"/>
</dbReference>
<dbReference type="GO" id="GO:0005737">
    <property type="term" value="C:cytoplasm"/>
    <property type="evidence" value="ECO:0007669"/>
    <property type="project" value="UniProtKB-SubCell"/>
</dbReference>
<dbReference type="GO" id="GO:0008775">
    <property type="term" value="F:acetate CoA-transferase activity"/>
    <property type="evidence" value="ECO:0007669"/>
    <property type="project" value="UniProtKB-EC"/>
</dbReference>
<dbReference type="GO" id="GO:0047371">
    <property type="term" value="F:butyrate-acetoacetate CoA-transferase activity"/>
    <property type="evidence" value="ECO:0007669"/>
    <property type="project" value="RHEA"/>
</dbReference>
<dbReference type="GO" id="GO:0008410">
    <property type="term" value="F:CoA-transferase activity"/>
    <property type="evidence" value="ECO:0000318"/>
    <property type="project" value="GO_Central"/>
</dbReference>
<dbReference type="GO" id="GO:0046459">
    <property type="term" value="P:short-chain fatty acid metabolic process"/>
    <property type="evidence" value="ECO:0007669"/>
    <property type="project" value="UniProtKB-UniPathway"/>
</dbReference>
<dbReference type="Gene3D" id="3.40.1080.10">
    <property type="entry name" value="Glutaconate Coenzyme A-transferase"/>
    <property type="match status" value="1"/>
</dbReference>
<dbReference type="InterPro" id="IPR012792">
    <property type="entry name" value="3-oxoacid_CoA-transf_A"/>
</dbReference>
<dbReference type="InterPro" id="IPR004165">
    <property type="entry name" value="CoA_trans_fam_I"/>
</dbReference>
<dbReference type="InterPro" id="IPR004163">
    <property type="entry name" value="CoA_transf_BS"/>
</dbReference>
<dbReference type="InterPro" id="IPR037171">
    <property type="entry name" value="NagB/RpiA_transferase-like"/>
</dbReference>
<dbReference type="NCBIfam" id="TIGR02429">
    <property type="entry name" value="pcaI_scoA_fam"/>
    <property type="match status" value="1"/>
</dbReference>
<dbReference type="NCBIfam" id="NF007394">
    <property type="entry name" value="PRK09920.1"/>
    <property type="match status" value="1"/>
</dbReference>
<dbReference type="PANTHER" id="PTHR13707:SF60">
    <property type="entry name" value="ACETATE COA-TRANSFERASE SUBUNIT ALPHA"/>
    <property type="match status" value="1"/>
</dbReference>
<dbReference type="PANTHER" id="PTHR13707">
    <property type="entry name" value="KETOACID-COENZYME A TRANSFERASE"/>
    <property type="match status" value="1"/>
</dbReference>
<dbReference type="Pfam" id="PF01144">
    <property type="entry name" value="CoA_trans"/>
    <property type="match status" value="1"/>
</dbReference>
<dbReference type="SMART" id="SM00882">
    <property type="entry name" value="CoA_trans"/>
    <property type="match status" value="1"/>
</dbReference>
<dbReference type="SUPFAM" id="SSF100950">
    <property type="entry name" value="NagB/RpiA/CoA transferase-like"/>
    <property type="match status" value="1"/>
</dbReference>
<dbReference type="PROSITE" id="PS01273">
    <property type="entry name" value="COA_TRANSF_1"/>
    <property type="match status" value="1"/>
</dbReference>